<proteinExistence type="inferred from homology"/>
<accession>A4TLE6</accession>
<evidence type="ECO:0000255" key="1">
    <source>
        <dbReference type="HAMAP-Rule" id="MF_00687"/>
    </source>
</evidence>
<sequence>MQVRQSIHSDHAKQLDTAGLRREFLIEKIFAADDYTMTYSHIDRIIVGGILPVSKAVSIGNEVGKQLGVSYFLERRELGAINIGGPGLIVVDGQTYDIGNEEALYVGKGAKEVKFSSIDRANPAKFYYNSAPAHTTYPNKKITLAEASPQTLGDDATSNRRTINKYIVPDVLPTCQLSMGLTKLAPGSLWNTMPCHTHERRMEVYFYFDMDEETAVFHMMGQPQETRHLLVHNEQAVISPSWSIHSGVGTKRYTFIWGMVGENQVFGDMDHIAVSELR</sequence>
<organism>
    <name type="scientific">Yersinia pestis (strain Pestoides F)</name>
    <dbReference type="NCBI Taxonomy" id="386656"/>
    <lineage>
        <taxon>Bacteria</taxon>
        <taxon>Pseudomonadati</taxon>
        <taxon>Pseudomonadota</taxon>
        <taxon>Gammaproteobacteria</taxon>
        <taxon>Enterobacterales</taxon>
        <taxon>Yersiniaceae</taxon>
        <taxon>Yersinia</taxon>
    </lineage>
</organism>
<protein>
    <recommendedName>
        <fullName evidence="1">4-deoxy-L-threo-5-hexosulose-uronate ketol-isomerase</fullName>
        <ecNumber evidence="1">5.3.1.17</ecNumber>
    </recommendedName>
    <alternativeName>
        <fullName evidence="1">5-keto-4-deoxyuronate isomerase</fullName>
    </alternativeName>
    <alternativeName>
        <fullName evidence="1">DKI isomerase</fullName>
    </alternativeName>
</protein>
<gene>
    <name evidence="1" type="primary">kduI</name>
    <name type="ordered locus">YPDSF_1723</name>
</gene>
<comment type="function">
    <text evidence="1">Catalyzes the isomerization of 5-dehydro-4-deoxy-D-glucuronate to 3-deoxy-D-glycero-2,5-hexodiulosonate.</text>
</comment>
<comment type="catalytic activity">
    <reaction evidence="1">
        <text>5-dehydro-4-deoxy-D-glucuronate = 3-deoxy-D-glycero-2,5-hexodiulosonate</text>
        <dbReference type="Rhea" id="RHEA:23896"/>
        <dbReference type="ChEBI" id="CHEBI:17117"/>
        <dbReference type="ChEBI" id="CHEBI:29071"/>
        <dbReference type="EC" id="5.3.1.17"/>
    </reaction>
</comment>
<comment type="cofactor">
    <cofactor evidence="1">
        <name>Zn(2+)</name>
        <dbReference type="ChEBI" id="CHEBI:29105"/>
    </cofactor>
    <text evidence="1">Binds 1 zinc ion per subunit.</text>
</comment>
<comment type="pathway">
    <text evidence="1">Glycan metabolism; pectin degradation; 2-dehydro-3-deoxy-D-gluconate from pectin: step 4/5.</text>
</comment>
<comment type="similarity">
    <text evidence="1">Belongs to the KduI family.</text>
</comment>
<name>KDUI_YERPP</name>
<feature type="chain" id="PRO_1000045098" description="4-deoxy-L-threo-5-hexosulose-uronate ketol-isomerase">
    <location>
        <begin position="1"/>
        <end position="278"/>
    </location>
</feature>
<feature type="binding site" evidence="1">
    <location>
        <position position="196"/>
    </location>
    <ligand>
        <name>Zn(2+)</name>
        <dbReference type="ChEBI" id="CHEBI:29105"/>
    </ligand>
</feature>
<feature type="binding site" evidence="1">
    <location>
        <position position="198"/>
    </location>
    <ligand>
        <name>Zn(2+)</name>
        <dbReference type="ChEBI" id="CHEBI:29105"/>
    </ligand>
</feature>
<feature type="binding site" evidence="1">
    <location>
        <position position="203"/>
    </location>
    <ligand>
        <name>Zn(2+)</name>
        <dbReference type="ChEBI" id="CHEBI:29105"/>
    </ligand>
</feature>
<feature type="binding site" evidence="1">
    <location>
        <position position="245"/>
    </location>
    <ligand>
        <name>Zn(2+)</name>
        <dbReference type="ChEBI" id="CHEBI:29105"/>
    </ligand>
</feature>
<dbReference type="EC" id="5.3.1.17" evidence="1"/>
<dbReference type="EMBL" id="CP000668">
    <property type="protein sequence ID" value="ABP40108.1"/>
    <property type="molecule type" value="Genomic_DNA"/>
</dbReference>
<dbReference type="RefSeq" id="WP_002210829.1">
    <property type="nucleotide sequence ID" value="NZ_CP009715.1"/>
</dbReference>
<dbReference type="SMR" id="A4TLE6"/>
<dbReference type="GeneID" id="57976853"/>
<dbReference type="KEGG" id="ypp:YPDSF_1723"/>
<dbReference type="PATRIC" id="fig|386656.14.peg.3171"/>
<dbReference type="UniPathway" id="UPA00545">
    <property type="reaction ID" value="UER00826"/>
</dbReference>
<dbReference type="GO" id="GO:0008697">
    <property type="term" value="F:4-deoxy-L-threo-5-hexosulose-uronate ketol-isomerase activity"/>
    <property type="evidence" value="ECO:0007669"/>
    <property type="project" value="UniProtKB-UniRule"/>
</dbReference>
<dbReference type="GO" id="GO:0008270">
    <property type="term" value="F:zinc ion binding"/>
    <property type="evidence" value="ECO:0007669"/>
    <property type="project" value="UniProtKB-UniRule"/>
</dbReference>
<dbReference type="GO" id="GO:0019698">
    <property type="term" value="P:D-galacturonate catabolic process"/>
    <property type="evidence" value="ECO:0007669"/>
    <property type="project" value="TreeGrafter"/>
</dbReference>
<dbReference type="GO" id="GO:0042840">
    <property type="term" value="P:D-glucuronate catabolic process"/>
    <property type="evidence" value="ECO:0007669"/>
    <property type="project" value="TreeGrafter"/>
</dbReference>
<dbReference type="GO" id="GO:0045490">
    <property type="term" value="P:pectin catabolic process"/>
    <property type="evidence" value="ECO:0007669"/>
    <property type="project" value="UniProtKB-UniRule"/>
</dbReference>
<dbReference type="CDD" id="cd20491">
    <property type="entry name" value="cupin_KduI_C"/>
    <property type="match status" value="1"/>
</dbReference>
<dbReference type="CDD" id="cd20294">
    <property type="entry name" value="cupin_KduI_N"/>
    <property type="match status" value="1"/>
</dbReference>
<dbReference type="FunFam" id="2.60.120.10:FF:000018">
    <property type="entry name" value="4-deoxy-L-threo-5-hexosulose-uronate ketol-isomerase"/>
    <property type="match status" value="1"/>
</dbReference>
<dbReference type="FunFam" id="2.60.120.520:FF:000001">
    <property type="entry name" value="4-deoxy-L-threo-5-hexosulose-uronate ketol-isomerase"/>
    <property type="match status" value="1"/>
</dbReference>
<dbReference type="Gene3D" id="2.60.120.10">
    <property type="entry name" value="Jelly Rolls"/>
    <property type="match status" value="1"/>
</dbReference>
<dbReference type="Gene3D" id="2.60.120.520">
    <property type="entry name" value="pectin degrading enzyme 5-keto 4- deoxyuronate isomerase, domain 1"/>
    <property type="match status" value="1"/>
</dbReference>
<dbReference type="HAMAP" id="MF_00687">
    <property type="entry name" value="KduI"/>
    <property type="match status" value="1"/>
</dbReference>
<dbReference type="InterPro" id="IPR007045">
    <property type="entry name" value="KduI"/>
</dbReference>
<dbReference type="InterPro" id="IPR021120">
    <property type="entry name" value="KduI/IolB_isomerase"/>
</dbReference>
<dbReference type="InterPro" id="IPR027449">
    <property type="entry name" value="KduI_N"/>
</dbReference>
<dbReference type="InterPro" id="IPR014710">
    <property type="entry name" value="RmlC-like_jellyroll"/>
</dbReference>
<dbReference type="InterPro" id="IPR011051">
    <property type="entry name" value="RmlC_Cupin_sf"/>
</dbReference>
<dbReference type="NCBIfam" id="NF002091">
    <property type="entry name" value="PRK00924.1"/>
    <property type="match status" value="1"/>
</dbReference>
<dbReference type="PANTHER" id="PTHR38461">
    <property type="entry name" value="4-DEOXY-L-THREO-5-HEXOSULOSE-URONATE KETOL-ISOMERASE"/>
    <property type="match status" value="1"/>
</dbReference>
<dbReference type="PANTHER" id="PTHR38461:SF1">
    <property type="entry name" value="4-DEOXY-L-THREO-5-HEXOSULOSE-URONATE KETOL-ISOMERASE"/>
    <property type="match status" value="1"/>
</dbReference>
<dbReference type="Pfam" id="PF04962">
    <property type="entry name" value="KduI"/>
    <property type="match status" value="1"/>
</dbReference>
<dbReference type="PIRSF" id="PIRSF006625">
    <property type="entry name" value="KduI"/>
    <property type="match status" value="1"/>
</dbReference>
<dbReference type="SUPFAM" id="SSF51182">
    <property type="entry name" value="RmlC-like cupins"/>
    <property type="match status" value="1"/>
</dbReference>
<keyword id="KW-0413">Isomerase</keyword>
<keyword id="KW-0479">Metal-binding</keyword>
<keyword id="KW-0862">Zinc</keyword>
<reference key="1">
    <citation type="submission" date="2007-02" db="EMBL/GenBank/DDBJ databases">
        <title>Complete sequence of chromosome of Yersinia pestis Pestoides F.</title>
        <authorList>
            <consortium name="US DOE Joint Genome Institute"/>
            <person name="Copeland A."/>
            <person name="Lucas S."/>
            <person name="Lapidus A."/>
            <person name="Barry K."/>
            <person name="Detter J.C."/>
            <person name="Glavina del Rio T."/>
            <person name="Hammon N."/>
            <person name="Israni S."/>
            <person name="Dalin E."/>
            <person name="Tice H."/>
            <person name="Pitluck S."/>
            <person name="Di Bartolo G."/>
            <person name="Chain P."/>
            <person name="Malfatti S."/>
            <person name="Shin M."/>
            <person name="Vergez L."/>
            <person name="Schmutz J."/>
            <person name="Larimer F."/>
            <person name="Land M."/>
            <person name="Hauser L."/>
            <person name="Worsham P."/>
            <person name="Chu M."/>
            <person name="Bearden S."/>
            <person name="Garcia E."/>
            <person name="Richardson P."/>
        </authorList>
    </citation>
    <scope>NUCLEOTIDE SEQUENCE [LARGE SCALE GENOMIC DNA]</scope>
    <source>
        <strain>Pestoides F</strain>
    </source>
</reference>